<keyword id="KW-0456">Lyase</keyword>
<organism>
    <name type="scientific">Prochlorococcus marinus (strain MIT 9312)</name>
    <dbReference type="NCBI Taxonomy" id="74546"/>
    <lineage>
        <taxon>Bacteria</taxon>
        <taxon>Bacillati</taxon>
        <taxon>Cyanobacteriota</taxon>
        <taxon>Cyanophyceae</taxon>
        <taxon>Synechococcales</taxon>
        <taxon>Prochlorococcaceae</taxon>
        <taxon>Prochlorococcus</taxon>
    </lineage>
</organism>
<evidence type="ECO:0000255" key="1">
    <source>
        <dbReference type="HAMAP-Rule" id="MF_00434"/>
    </source>
</evidence>
<feature type="chain" id="PRO_0000231461" description="Putative pterin-4-alpha-carbinolamine dehydratase">
    <location>
        <begin position="1"/>
        <end position="96"/>
    </location>
</feature>
<sequence length="96" mass="11275">MEPYLLRDEELKELVVKIPGWEIKSEQIQREFSFANFIEAFSFMTKVALICEKYNHHPNWENIYSKVIISLNTHDLGGITNLDQTLASEINKIFDQ</sequence>
<gene>
    <name type="ordered locus">PMT9312_0492</name>
</gene>
<proteinExistence type="inferred from homology"/>
<dbReference type="EC" id="4.2.1.96" evidence="1"/>
<dbReference type="EMBL" id="CP000111">
    <property type="protein sequence ID" value="ABB49553.1"/>
    <property type="molecule type" value="Genomic_DNA"/>
</dbReference>
<dbReference type="RefSeq" id="WP_011376051.1">
    <property type="nucleotide sequence ID" value="NC_007577.1"/>
</dbReference>
<dbReference type="SMR" id="Q31C42"/>
<dbReference type="STRING" id="74546.PMT9312_0492"/>
<dbReference type="KEGG" id="pmi:PMT9312_0492"/>
<dbReference type="eggNOG" id="COG2154">
    <property type="taxonomic scope" value="Bacteria"/>
</dbReference>
<dbReference type="HOGENOM" id="CLU_081974_3_2_3"/>
<dbReference type="OrthoDB" id="9794987at2"/>
<dbReference type="Proteomes" id="UP000002715">
    <property type="component" value="Chromosome"/>
</dbReference>
<dbReference type="GO" id="GO:0008124">
    <property type="term" value="F:4-alpha-hydroxytetrahydrobiopterin dehydratase activity"/>
    <property type="evidence" value="ECO:0007669"/>
    <property type="project" value="UniProtKB-UniRule"/>
</dbReference>
<dbReference type="GO" id="GO:0006729">
    <property type="term" value="P:tetrahydrobiopterin biosynthetic process"/>
    <property type="evidence" value="ECO:0007669"/>
    <property type="project" value="InterPro"/>
</dbReference>
<dbReference type="CDD" id="cd00914">
    <property type="entry name" value="PCD_DCoH_subfamily_b"/>
    <property type="match status" value="1"/>
</dbReference>
<dbReference type="Gene3D" id="3.30.1360.20">
    <property type="entry name" value="Transcriptional coactivator/pterin dehydratase"/>
    <property type="match status" value="1"/>
</dbReference>
<dbReference type="HAMAP" id="MF_00434">
    <property type="entry name" value="Pterin_4_alpha"/>
    <property type="match status" value="1"/>
</dbReference>
<dbReference type="InterPro" id="IPR036428">
    <property type="entry name" value="PCD_sf"/>
</dbReference>
<dbReference type="InterPro" id="IPR001533">
    <property type="entry name" value="Pterin_deHydtase"/>
</dbReference>
<dbReference type="NCBIfam" id="NF002017">
    <property type="entry name" value="PRK00823.1-2"/>
    <property type="match status" value="1"/>
</dbReference>
<dbReference type="NCBIfam" id="NF002018">
    <property type="entry name" value="PRK00823.1-3"/>
    <property type="match status" value="1"/>
</dbReference>
<dbReference type="PANTHER" id="PTHR12599">
    <property type="entry name" value="PTERIN-4-ALPHA-CARBINOLAMINE DEHYDRATASE"/>
    <property type="match status" value="1"/>
</dbReference>
<dbReference type="PANTHER" id="PTHR12599:SF0">
    <property type="entry name" value="PTERIN-4-ALPHA-CARBINOLAMINE DEHYDRATASE"/>
    <property type="match status" value="1"/>
</dbReference>
<dbReference type="Pfam" id="PF01329">
    <property type="entry name" value="Pterin_4a"/>
    <property type="match status" value="1"/>
</dbReference>
<dbReference type="SUPFAM" id="SSF55248">
    <property type="entry name" value="PCD-like"/>
    <property type="match status" value="1"/>
</dbReference>
<protein>
    <recommendedName>
        <fullName evidence="1">Putative pterin-4-alpha-carbinolamine dehydratase</fullName>
        <shortName evidence="1">PHS</shortName>
        <ecNumber evidence="1">4.2.1.96</ecNumber>
    </recommendedName>
    <alternativeName>
        <fullName evidence="1">4-alpha-hydroxy-tetrahydropterin dehydratase</fullName>
    </alternativeName>
    <alternativeName>
        <fullName evidence="1">Pterin carbinolamine dehydratase</fullName>
        <shortName evidence="1">PCD</shortName>
    </alternativeName>
</protein>
<comment type="catalytic activity">
    <reaction evidence="1">
        <text>(4aS,6R)-4a-hydroxy-L-erythro-5,6,7,8-tetrahydrobiopterin = (6R)-L-erythro-6,7-dihydrobiopterin + H2O</text>
        <dbReference type="Rhea" id="RHEA:11920"/>
        <dbReference type="ChEBI" id="CHEBI:15377"/>
        <dbReference type="ChEBI" id="CHEBI:15642"/>
        <dbReference type="ChEBI" id="CHEBI:43120"/>
        <dbReference type="EC" id="4.2.1.96"/>
    </reaction>
</comment>
<comment type="similarity">
    <text evidence="1">Belongs to the pterin-4-alpha-carbinolamine dehydratase family.</text>
</comment>
<accession>Q31C42</accession>
<reference key="1">
    <citation type="journal article" date="2006" name="Science">
        <title>Genomic islands and the ecology and evolution of Prochlorococcus.</title>
        <authorList>
            <person name="Coleman M.L."/>
            <person name="Sullivan M.B."/>
            <person name="Martiny A.C."/>
            <person name="Steglich C."/>
            <person name="Barry K."/>
            <person name="Delong E.F."/>
            <person name="Chisholm S.W."/>
        </authorList>
    </citation>
    <scope>NUCLEOTIDE SEQUENCE [LARGE SCALE GENOMIC DNA]</scope>
    <source>
        <strain>MIT 9312</strain>
    </source>
</reference>
<name>PHS_PROM9</name>